<name>HIS5_CYAP4</name>
<comment type="function">
    <text evidence="1">IGPS catalyzes the conversion of PRFAR and glutamine to IGP, AICAR and glutamate. The HisH subunit catalyzes the hydrolysis of glutamine to glutamate and ammonia as part of the synthesis of IGP and AICAR. The resulting ammonia molecule is channeled to the active site of HisF.</text>
</comment>
<comment type="catalytic activity">
    <reaction evidence="1">
        <text>5-[(5-phospho-1-deoxy-D-ribulos-1-ylimino)methylamino]-1-(5-phospho-beta-D-ribosyl)imidazole-4-carboxamide + L-glutamine = D-erythro-1-(imidazol-4-yl)glycerol 3-phosphate + 5-amino-1-(5-phospho-beta-D-ribosyl)imidazole-4-carboxamide + L-glutamate + H(+)</text>
        <dbReference type="Rhea" id="RHEA:24793"/>
        <dbReference type="ChEBI" id="CHEBI:15378"/>
        <dbReference type="ChEBI" id="CHEBI:29985"/>
        <dbReference type="ChEBI" id="CHEBI:58278"/>
        <dbReference type="ChEBI" id="CHEBI:58359"/>
        <dbReference type="ChEBI" id="CHEBI:58475"/>
        <dbReference type="ChEBI" id="CHEBI:58525"/>
        <dbReference type="EC" id="4.3.2.10"/>
    </reaction>
</comment>
<comment type="catalytic activity">
    <reaction evidence="1">
        <text>L-glutamine + H2O = L-glutamate + NH4(+)</text>
        <dbReference type="Rhea" id="RHEA:15889"/>
        <dbReference type="ChEBI" id="CHEBI:15377"/>
        <dbReference type="ChEBI" id="CHEBI:28938"/>
        <dbReference type="ChEBI" id="CHEBI:29985"/>
        <dbReference type="ChEBI" id="CHEBI:58359"/>
        <dbReference type="EC" id="3.5.1.2"/>
    </reaction>
</comment>
<comment type="pathway">
    <text evidence="1">Amino-acid biosynthesis; L-histidine biosynthesis; L-histidine from 5-phospho-alpha-D-ribose 1-diphosphate: step 5/9.</text>
</comment>
<comment type="subunit">
    <text evidence="1">Heterodimer of HisH and HisF.</text>
</comment>
<comment type="subcellular location">
    <subcellularLocation>
        <location evidence="1">Cytoplasm</location>
    </subcellularLocation>
</comment>
<organism>
    <name type="scientific">Cyanothece sp. (strain PCC 7425 / ATCC 29141)</name>
    <dbReference type="NCBI Taxonomy" id="395961"/>
    <lineage>
        <taxon>Bacteria</taxon>
        <taxon>Bacillati</taxon>
        <taxon>Cyanobacteriota</taxon>
        <taxon>Cyanophyceae</taxon>
        <taxon>Gomontiellales</taxon>
        <taxon>Cyanothecaceae</taxon>
        <taxon>Cyanothece</taxon>
    </lineage>
</organism>
<evidence type="ECO:0000255" key="1">
    <source>
        <dbReference type="HAMAP-Rule" id="MF_00278"/>
    </source>
</evidence>
<feature type="chain" id="PRO_1000132538" description="Imidazole glycerol phosphate synthase subunit HisH">
    <location>
        <begin position="1"/>
        <end position="211"/>
    </location>
</feature>
<feature type="domain" description="Glutamine amidotransferase type-1" evidence="1">
    <location>
        <begin position="3"/>
        <end position="211"/>
    </location>
</feature>
<feature type="active site" description="Nucleophile" evidence="1">
    <location>
        <position position="81"/>
    </location>
</feature>
<feature type="active site" evidence="1">
    <location>
        <position position="186"/>
    </location>
</feature>
<feature type="active site" evidence="1">
    <location>
        <position position="188"/>
    </location>
</feature>
<keyword id="KW-0028">Amino-acid biosynthesis</keyword>
<keyword id="KW-0963">Cytoplasm</keyword>
<keyword id="KW-0315">Glutamine amidotransferase</keyword>
<keyword id="KW-0368">Histidine biosynthesis</keyword>
<keyword id="KW-0378">Hydrolase</keyword>
<keyword id="KW-0456">Lyase</keyword>
<reference key="1">
    <citation type="journal article" date="2011" name="MBio">
        <title>Novel metabolic attributes of the genus Cyanothece, comprising a group of unicellular nitrogen-fixing Cyanobacteria.</title>
        <authorList>
            <person name="Bandyopadhyay A."/>
            <person name="Elvitigala T."/>
            <person name="Welsh E."/>
            <person name="Stockel J."/>
            <person name="Liberton M."/>
            <person name="Min H."/>
            <person name="Sherman L.A."/>
            <person name="Pakrasi H.B."/>
        </authorList>
    </citation>
    <scope>NUCLEOTIDE SEQUENCE [LARGE SCALE GENOMIC DNA]</scope>
    <source>
        <strain>PCC 7425 / ATCC 29141</strain>
    </source>
</reference>
<dbReference type="EC" id="4.3.2.10" evidence="1"/>
<dbReference type="EC" id="3.5.1.2" evidence="1"/>
<dbReference type="EMBL" id="CP001344">
    <property type="protein sequence ID" value="ACL46263.1"/>
    <property type="molecule type" value="Genomic_DNA"/>
</dbReference>
<dbReference type="SMR" id="B8HUR1"/>
<dbReference type="STRING" id="395961.Cyan7425_3947"/>
<dbReference type="KEGG" id="cyn:Cyan7425_3947"/>
<dbReference type="eggNOG" id="COG0118">
    <property type="taxonomic scope" value="Bacteria"/>
</dbReference>
<dbReference type="HOGENOM" id="CLU_071837_2_2_3"/>
<dbReference type="OrthoDB" id="9807137at2"/>
<dbReference type="UniPathway" id="UPA00031">
    <property type="reaction ID" value="UER00010"/>
</dbReference>
<dbReference type="GO" id="GO:0005737">
    <property type="term" value="C:cytoplasm"/>
    <property type="evidence" value="ECO:0007669"/>
    <property type="project" value="UniProtKB-SubCell"/>
</dbReference>
<dbReference type="GO" id="GO:0004359">
    <property type="term" value="F:glutaminase activity"/>
    <property type="evidence" value="ECO:0007669"/>
    <property type="project" value="UniProtKB-EC"/>
</dbReference>
<dbReference type="GO" id="GO:0000107">
    <property type="term" value="F:imidazoleglycerol-phosphate synthase activity"/>
    <property type="evidence" value="ECO:0007669"/>
    <property type="project" value="UniProtKB-UniRule"/>
</dbReference>
<dbReference type="GO" id="GO:0016829">
    <property type="term" value="F:lyase activity"/>
    <property type="evidence" value="ECO:0007669"/>
    <property type="project" value="UniProtKB-KW"/>
</dbReference>
<dbReference type="GO" id="GO:0000105">
    <property type="term" value="P:L-histidine biosynthetic process"/>
    <property type="evidence" value="ECO:0007669"/>
    <property type="project" value="UniProtKB-UniRule"/>
</dbReference>
<dbReference type="CDD" id="cd01748">
    <property type="entry name" value="GATase1_IGP_Synthase"/>
    <property type="match status" value="1"/>
</dbReference>
<dbReference type="FunFam" id="3.40.50.880:FF:000009">
    <property type="entry name" value="Imidazole glycerol phosphate synthase subunit HisH"/>
    <property type="match status" value="1"/>
</dbReference>
<dbReference type="Gene3D" id="3.40.50.880">
    <property type="match status" value="1"/>
</dbReference>
<dbReference type="HAMAP" id="MF_00278">
    <property type="entry name" value="HisH"/>
    <property type="match status" value="1"/>
</dbReference>
<dbReference type="InterPro" id="IPR029062">
    <property type="entry name" value="Class_I_gatase-like"/>
</dbReference>
<dbReference type="InterPro" id="IPR017926">
    <property type="entry name" value="GATASE"/>
</dbReference>
<dbReference type="InterPro" id="IPR010139">
    <property type="entry name" value="Imidazole-glycPsynth_HisH"/>
</dbReference>
<dbReference type="NCBIfam" id="TIGR01855">
    <property type="entry name" value="IMP_synth_hisH"/>
    <property type="match status" value="1"/>
</dbReference>
<dbReference type="PANTHER" id="PTHR42701">
    <property type="entry name" value="IMIDAZOLE GLYCEROL PHOSPHATE SYNTHASE SUBUNIT HISH"/>
    <property type="match status" value="1"/>
</dbReference>
<dbReference type="PANTHER" id="PTHR42701:SF1">
    <property type="entry name" value="IMIDAZOLE GLYCEROL PHOSPHATE SYNTHASE SUBUNIT HISH"/>
    <property type="match status" value="1"/>
</dbReference>
<dbReference type="Pfam" id="PF00117">
    <property type="entry name" value="GATase"/>
    <property type="match status" value="1"/>
</dbReference>
<dbReference type="PIRSF" id="PIRSF000495">
    <property type="entry name" value="Amidotransf_hisH"/>
    <property type="match status" value="1"/>
</dbReference>
<dbReference type="SUPFAM" id="SSF52317">
    <property type="entry name" value="Class I glutamine amidotransferase-like"/>
    <property type="match status" value="1"/>
</dbReference>
<dbReference type="PROSITE" id="PS51273">
    <property type="entry name" value="GATASE_TYPE_1"/>
    <property type="match status" value="1"/>
</dbReference>
<gene>
    <name evidence="1" type="primary">hisH</name>
    <name type="ordered locus">Cyan7425_3947</name>
</gene>
<accession>B8HUR1</accession>
<sequence>MTVIAVIDYDMGNLHSACKGLENAGAQTVVSDRPEDLFAADAVVLPGVGAFDPAMQHLRSRQLVPVIHDLIASGKPFLGICLGLQILFEHSEEGQEPGLGILAGTVKRFDPEPGLTIPHMGWNQLDLTQPGLPLWQQLELRPWLYFVHSYYVEPADLEVQAATITHGSQTVTAAIARNNLVAVQFHPEKSADAGLQILANFVSQIKAPVLV</sequence>
<proteinExistence type="inferred from homology"/>
<protein>
    <recommendedName>
        <fullName evidence="1">Imidazole glycerol phosphate synthase subunit HisH</fullName>
        <ecNumber evidence="1">4.3.2.10</ecNumber>
    </recommendedName>
    <alternativeName>
        <fullName evidence="1">IGP synthase glutaminase subunit</fullName>
        <ecNumber evidence="1">3.5.1.2</ecNumber>
    </alternativeName>
    <alternativeName>
        <fullName evidence="1">IGP synthase subunit HisH</fullName>
    </alternativeName>
    <alternativeName>
        <fullName evidence="1">ImGP synthase subunit HisH</fullName>
        <shortName evidence="1">IGPS subunit HisH</shortName>
    </alternativeName>
</protein>